<name>RK32_TOBAC</name>
<gene>
    <name type="primary">rpl32</name>
</gene>
<evidence type="ECO:0000269" key="1">
    <source>
    </source>
</evidence>
<evidence type="ECO:0000305" key="2"/>
<sequence>MAVPKKRTSTSKKRIRKNIWKRKGYSIALKAFSLAKSLSTGNSKSFFVRQTKINK</sequence>
<keyword id="KW-0150">Chloroplast</keyword>
<keyword id="KW-0903">Direct protein sequencing</keyword>
<keyword id="KW-0934">Plastid</keyword>
<keyword id="KW-1185">Reference proteome</keyword>
<keyword id="KW-0687">Ribonucleoprotein</keyword>
<keyword id="KW-0689">Ribosomal protein</keyword>
<dbReference type="EMBL" id="Z00044">
    <property type="protein sequence ID" value="CAA77431.1"/>
    <property type="molecule type" value="Genomic_DNA"/>
</dbReference>
<dbReference type="PIR" id="S27288">
    <property type="entry name" value="R5NT32"/>
</dbReference>
<dbReference type="RefSeq" id="NP_054555.1">
    <property type="nucleotide sequence ID" value="NC_001879.2"/>
</dbReference>
<dbReference type="SMR" id="P12198"/>
<dbReference type="GeneID" id="800466"/>
<dbReference type="KEGG" id="nta:800466"/>
<dbReference type="OMA" id="IHKSLWK"/>
<dbReference type="OrthoDB" id="1938523at2759"/>
<dbReference type="Proteomes" id="UP000084051">
    <property type="component" value="Unplaced"/>
</dbReference>
<dbReference type="GO" id="GO:0009507">
    <property type="term" value="C:chloroplast"/>
    <property type="evidence" value="ECO:0007669"/>
    <property type="project" value="UniProtKB-SubCell"/>
</dbReference>
<dbReference type="GO" id="GO:0015934">
    <property type="term" value="C:large ribosomal subunit"/>
    <property type="evidence" value="ECO:0007669"/>
    <property type="project" value="InterPro"/>
</dbReference>
<dbReference type="GO" id="GO:0003735">
    <property type="term" value="F:structural constituent of ribosome"/>
    <property type="evidence" value="ECO:0007669"/>
    <property type="project" value="InterPro"/>
</dbReference>
<dbReference type="GO" id="GO:0006412">
    <property type="term" value="P:translation"/>
    <property type="evidence" value="ECO:0007669"/>
    <property type="project" value="UniProtKB-UniRule"/>
</dbReference>
<dbReference type="HAMAP" id="MF_00340">
    <property type="entry name" value="Ribosomal_bL32"/>
    <property type="match status" value="1"/>
</dbReference>
<dbReference type="InterPro" id="IPR002677">
    <property type="entry name" value="Ribosomal_bL32"/>
</dbReference>
<dbReference type="InterPro" id="IPR044958">
    <property type="entry name" value="Ribosomal_bL32_plant/cyanobact"/>
</dbReference>
<dbReference type="InterPro" id="IPR011332">
    <property type="entry name" value="Ribosomal_zn-bd"/>
</dbReference>
<dbReference type="PANTHER" id="PTHR36083">
    <property type="entry name" value="50S RIBOSOMAL PROTEIN L32, CHLOROPLASTIC"/>
    <property type="match status" value="1"/>
</dbReference>
<dbReference type="PANTHER" id="PTHR36083:SF1">
    <property type="entry name" value="LARGE RIBOSOMAL SUBUNIT PROTEIN BL32C"/>
    <property type="match status" value="1"/>
</dbReference>
<dbReference type="Pfam" id="PF01783">
    <property type="entry name" value="Ribosomal_L32p"/>
    <property type="match status" value="1"/>
</dbReference>
<dbReference type="SUPFAM" id="SSF57829">
    <property type="entry name" value="Zn-binding ribosomal proteins"/>
    <property type="match status" value="1"/>
</dbReference>
<accession>P12198</accession>
<reference key="1">
    <citation type="journal article" date="1986" name="EMBO J.">
        <title>The complete nucleotide sequence of the tobacco chloroplast genome: its gene organization and expression.</title>
        <authorList>
            <person name="Shinozaki K."/>
            <person name="Ohme M."/>
            <person name="Tanaka M."/>
            <person name="Wakasugi T."/>
            <person name="Hayashida N."/>
            <person name="Matsubayashi T."/>
            <person name="Zaita N."/>
            <person name="Chunwongse J."/>
            <person name="Obokata J."/>
            <person name="Yamaguchi-Shinozaki K."/>
            <person name="Ohto C."/>
            <person name="Torazawa K."/>
            <person name="Meng B.-Y."/>
            <person name="Sugita M."/>
            <person name="Deno H."/>
            <person name="Kamogashira T."/>
            <person name="Yamada K."/>
            <person name="Kusuda J."/>
            <person name="Takaiwa F."/>
            <person name="Kato A."/>
            <person name="Tohdoh N."/>
            <person name="Shimada H."/>
            <person name="Sugiura M."/>
        </authorList>
    </citation>
    <scope>NUCLEOTIDE SEQUENCE [LARGE SCALE GENOMIC DNA]</scope>
    <source>
        <strain>cv. Bright Yellow 4</strain>
    </source>
</reference>
<reference key="2">
    <citation type="journal article" date="1990" name="FEBS Lett.">
        <title>Chloroplast ribosomal protein L32 is encoded in the chloroplast genome.</title>
        <authorList>
            <person name="Yokoi F."/>
            <person name="Vassileva A."/>
            <person name="Hayashida N."/>
            <person name="Torazawa K."/>
            <person name="Wakasugi T."/>
            <person name="Sugiura M."/>
        </authorList>
    </citation>
    <scope>PROTEIN SEQUENCE OF 2-19</scope>
    <source>
        <strain>cv. Bright Yellow 4</strain>
        <tissue>Leaf</tissue>
    </source>
</reference>
<geneLocation type="chloroplast"/>
<feature type="initiator methionine" description="Removed" evidence="1">
    <location>
        <position position="1"/>
    </location>
</feature>
<feature type="chain" id="PRO_0000172481" description="Large ribosomal subunit protein bL32c">
    <location>
        <begin position="2"/>
        <end position="55"/>
    </location>
</feature>
<protein>
    <recommendedName>
        <fullName evidence="2">Large ribosomal subunit protein bL32c</fullName>
    </recommendedName>
    <alternativeName>
        <fullName>50S ribosomal protein L32, chloroplastic</fullName>
    </alternativeName>
</protein>
<proteinExistence type="evidence at protein level"/>
<organism>
    <name type="scientific">Nicotiana tabacum</name>
    <name type="common">Common tobacco</name>
    <dbReference type="NCBI Taxonomy" id="4097"/>
    <lineage>
        <taxon>Eukaryota</taxon>
        <taxon>Viridiplantae</taxon>
        <taxon>Streptophyta</taxon>
        <taxon>Embryophyta</taxon>
        <taxon>Tracheophyta</taxon>
        <taxon>Spermatophyta</taxon>
        <taxon>Magnoliopsida</taxon>
        <taxon>eudicotyledons</taxon>
        <taxon>Gunneridae</taxon>
        <taxon>Pentapetalae</taxon>
        <taxon>asterids</taxon>
        <taxon>lamiids</taxon>
        <taxon>Solanales</taxon>
        <taxon>Solanaceae</taxon>
        <taxon>Nicotianoideae</taxon>
        <taxon>Nicotianeae</taxon>
        <taxon>Nicotiana</taxon>
    </lineage>
</organism>
<comment type="subcellular location">
    <subcellularLocation>
        <location>Plastid</location>
        <location>Chloroplast</location>
    </subcellularLocation>
</comment>
<comment type="similarity">
    <text evidence="2">Belongs to the bacterial ribosomal protein bL32 family.</text>
</comment>